<proteinExistence type="inferred from homology"/>
<comment type="function">
    <text evidence="1">Allows the formation of correctly charged Gln-tRNA(Gln) through the transamidation of misacylated Glu-tRNA(Gln) in organisms which lack glutaminyl-tRNA synthetase. The reaction takes place in the presence of glutamine and ATP through an activated gamma-phospho-Glu-tRNA(Gln).</text>
</comment>
<comment type="catalytic activity">
    <reaction evidence="1">
        <text>L-glutamyl-tRNA(Gln) + L-glutamine + ATP + H2O = L-glutaminyl-tRNA(Gln) + L-glutamate + ADP + phosphate + H(+)</text>
        <dbReference type="Rhea" id="RHEA:17521"/>
        <dbReference type="Rhea" id="RHEA-COMP:9681"/>
        <dbReference type="Rhea" id="RHEA-COMP:9684"/>
        <dbReference type="ChEBI" id="CHEBI:15377"/>
        <dbReference type="ChEBI" id="CHEBI:15378"/>
        <dbReference type="ChEBI" id="CHEBI:29985"/>
        <dbReference type="ChEBI" id="CHEBI:30616"/>
        <dbReference type="ChEBI" id="CHEBI:43474"/>
        <dbReference type="ChEBI" id="CHEBI:58359"/>
        <dbReference type="ChEBI" id="CHEBI:78520"/>
        <dbReference type="ChEBI" id="CHEBI:78521"/>
        <dbReference type="ChEBI" id="CHEBI:456216"/>
        <dbReference type="EC" id="6.3.5.7"/>
    </reaction>
</comment>
<comment type="subunit">
    <text evidence="1">Heterotrimer of A, B and C subunits.</text>
</comment>
<comment type="similarity">
    <text evidence="1">Belongs to the amidase family. GatA subfamily.</text>
</comment>
<feature type="chain" id="PRO_1000122493" description="Glutamyl-tRNA(Gln) amidotransferase subunit A">
    <location>
        <begin position="1"/>
        <end position="488"/>
    </location>
</feature>
<feature type="active site" description="Charge relay system" evidence="1">
    <location>
        <position position="77"/>
    </location>
</feature>
<feature type="active site" description="Charge relay system" evidence="1">
    <location>
        <position position="152"/>
    </location>
</feature>
<feature type="active site" description="Acyl-ester intermediate" evidence="1">
    <location>
        <position position="176"/>
    </location>
</feature>
<reference key="1">
    <citation type="journal article" date="2009" name="BMC Genomics">
        <title>Evidence for niche adaptation in the genome of the bovine pathogen Streptococcus uberis.</title>
        <authorList>
            <person name="Ward P.N."/>
            <person name="Holden M.T.G."/>
            <person name="Leigh J.A."/>
            <person name="Lennard N."/>
            <person name="Bignell A."/>
            <person name="Barron A."/>
            <person name="Clark L."/>
            <person name="Quail M.A."/>
            <person name="Woodward J."/>
            <person name="Barrell B.G."/>
            <person name="Egan S.A."/>
            <person name="Field T.R."/>
            <person name="Maskell D."/>
            <person name="Kehoe M."/>
            <person name="Dowson C.G."/>
            <person name="Chanter N."/>
            <person name="Whatmore A.M."/>
            <person name="Bentley S.D."/>
            <person name="Parkhill J."/>
        </authorList>
    </citation>
    <scope>NUCLEOTIDE SEQUENCE [LARGE SCALE GENOMIC DNA]</scope>
    <source>
        <strain>ATCC BAA-854 / 0140J</strain>
    </source>
</reference>
<dbReference type="EC" id="6.3.5.7" evidence="1"/>
<dbReference type="EMBL" id="AM946015">
    <property type="protein sequence ID" value="CAR43253.1"/>
    <property type="molecule type" value="Genomic_DNA"/>
</dbReference>
<dbReference type="RefSeq" id="WP_015911826.1">
    <property type="nucleotide sequence ID" value="NC_012004.1"/>
</dbReference>
<dbReference type="SMR" id="B9DVG6"/>
<dbReference type="STRING" id="218495.SUB1517"/>
<dbReference type="KEGG" id="sub:SUB1517"/>
<dbReference type="eggNOG" id="COG0154">
    <property type="taxonomic scope" value="Bacteria"/>
</dbReference>
<dbReference type="HOGENOM" id="CLU_009600_0_3_9"/>
<dbReference type="OrthoDB" id="9811471at2"/>
<dbReference type="Proteomes" id="UP000000449">
    <property type="component" value="Chromosome"/>
</dbReference>
<dbReference type="GO" id="GO:0030956">
    <property type="term" value="C:glutamyl-tRNA(Gln) amidotransferase complex"/>
    <property type="evidence" value="ECO:0007669"/>
    <property type="project" value="InterPro"/>
</dbReference>
<dbReference type="GO" id="GO:0005524">
    <property type="term" value="F:ATP binding"/>
    <property type="evidence" value="ECO:0007669"/>
    <property type="project" value="UniProtKB-KW"/>
</dbReference>
<dbReference type="GO" id="GO:0050567">
    <property type="term" value="F:glutaminyl-tRNA synthase (glutamine-hydrolyzing) activity"/>
    <property type="evidence" value="ECO:0007669"/>
    <property type="project" value="UniProtKB-UniRule"/>
</dbReference>
<dbReference type="GO" id="GO:0006412">
    <property type="term" value="P:translation"/>
    <property type="evidence" value="ECO:0007669"/>
    <property type="project" value="UniProtKB-UniRule"/>
</dbReference>
<dbReference type="Gene3D" id="3.90.1300.10">
    <property type="entry name" value="Amidase signature (AS) domain"/>
    <property type="match status" value="1"/>
</dbReference>
<dbReference type="HAMAP" id="MF_00120">
    <property type="entry name" value="GatA"/>
    <property type="match status" value="1"/>
</dbReference>
<dbReference type="InterPro" id="IPR000120">
    <property type="entry name" value="Amidase"/>
</dbReference>
<dbReference type="InterPro" id="IPR020556">
    <property type="entry name" value="Amidase_CS"/>
</dbReference>
<dbReference type="InterPro" id="IPR023631">
    <property type="entry name" value="Amidase_dom"/>
</dbReference>
<dbReference type="InterPro" id="IPR036928">
    <property type="entry name" value="AS_sf"/>
</dbReference>
<dbReference type="InterPro" id="IPR004412">
    <property type="entry name" value="GatA"/>
</dbReference>
<dbReference type="NCBIfam" id="TIGR00132">
    <property type="entry name" value="gatA"/>
    <property type="match status" value="1"/>
</dbReference>
<dbReference type="PANTHER" id="PTHR11895:SF151">
    <property type="entry name" value="GLUTAMYL-TRNA(GLN) AMIDOTRANSFERASE SUBUNIT A"/>
    <property type="match status" value="1"/>
</dbReference>
<dbReference type="PANTHER" id="PTHR11895">
    <property type="entry name" value="TRANSAMIDASE"/>
    <property type="match status" value="1"/>
</dbReference>
<dbReference type="Pfam" id="PF01425">
    <property type="entry name" value="Amidase"/>
    <property type="match status" value="1"/>
</dbReference>
<dbReference type="SUPFAM" id="SSF75304">
    <property type="entry name" value="Amidase signature (AS) enzymes"/>
    <property type="match status" value="1"/>
</dbReference>
<dbReference type="PROSITE" id="PS00571">
    <property type="entry name" value="AMIDASES"/>
    <property type="match status" value="1"/>
</dbReference>
<evidence type="ECO:0000255" key="1">
    <source>
        <dbReference type="HAMAP-Rule" id="MF_00120"/>
    </source>
</evidence>
<organism>
    <name type="scientific">Streptococcus uberis (strain ATCC BAA-854 / 0140J)</name>
    <dbReference type="NCBI Taxonomy" id="218495"/>
    <lineage>
        <taxon>Bacteria</taxon>
        <taxon>Bacillati</taxon>
        <taxon>Bacillota</taxon>
        <taxon>Bacilli</taxon>
        <taxon>Lactobacillales</taxon>
        <taxon>Streptococcaceae</taxon>
        <taxon>Streptococcus</taxon>
    </lineage>
</organism>
<name>GATA_STRU0</name>
<gene>
    <name evidence="1" type="primary">gatA</name>
    <name type="ordered locus">SUB1517</name>
</gene>
<accession>B9DVG6</accession>
<keyword id="KW-0067">ATP-binding</keyword>
<keyword id="KW-0436">Ligase</keyword>
<keyword id="KW-0547">Nucleotide-binding</keyword>
<keyword id="KW-0648">Protein biosynthesis</keyword>
<keyword id="KW-1185">Reference proteome</keyword>
<protein>
    <recommendedName>
        <fullName evidence="1">Glutamyl-tRNA(Gln) amidotransferase subunit A</fullName>
        <shortName evidence="1">Glu-ADT subunit A</shortName>
        <ecNumber evidence="1">6.3.5.7</ecNumber>
    </recommendedName>
</protein>
<sequence>MSLNHKTIDELHTLLLSKEISAKELTQATLDDIKAREDAVGSFITLAEEKALSQAEAIDARGIDPNNVMSGIPFAVKDNISTEGILTTAASKMLYNYEPIFNATAIEKAYAKDMIVIGKTNMDEFAMGGSTETSYFKKTKNAWDHSKVPGGSSGGSATAVASGQVRLSLGSDTGGSIRQPAAFNGIVGMKPTYGTVSRFGLIAFGSSLDQIGPFSQTVKENAQLLNVIAGSDDKDSTSAPVQIADYTSAIGKDIKGMKIALPKEYLGEGIDPKIKENILEAAKQFEKLGATVEEVSLPHSKYGVAVYYIIASSEASSNLQRFDGIRYGYRAQDAKTLEEIYVNTRSQGFGEEVKRRIMLGTFSLSSGYYDAYFKKAGQVRTLIIQDFEKVFADYDLIIGPTAPTVAFGLDTLNHDPVSMYLADLLTIPVNLAGLPGISIPSGFVDGLPVGLQLIGPKYSEERIYQAAAAFEATTDYHKQQPVIFGGEK</sequence>